<keyword id="KW-0068">Autocatalytic cleavage</keyword>
<keyword id="KW-0106">Calcium</keyword>
<keyword id="KW-1003">Cell membrane</keyword>
<keyword id="KW-0217">Developmental protein</keyword>
<keyword id="KW-0256">Endoplasmic reticulum</keyword>
<keyword id="KW-0333">Golgi apparatus</keyword>
<keyword id="KW-0378">Hydrolase</keyword>
<keyword id="KW-0449">Lipoprotein</keyword>
<keyword id="KW-0472">Membrane</keyword>
<keyword id="KW-0479">Metal-binding</keyword>
<keyword id="KW-0564">Palmitate</keyword>
<keyword id="KW-0645">Protease</keyword>
<keyword id="KW-1185">Reference proteome</keyword>
<keyword id="KW-0732">Signal</keyword>
<keyword id="KW-0808">Transferase</keyword>
<keyword id="KW-0862">Zinc</keyword>
<organism>
    <name type="scientific">Danio rerio</name>
    <name type="common">Zebrafish</name>
    <name type="synonym">Brachydanio rerio</name>
    <dbReference type="NCBI Taxonomy" id="7955"/>
    <lineage>
        <taxon>Eukaryota</taxon>
        <taxon>Metazoa</taxon>
        <taxon>Chordata</taxon>
        <taxon>Craniata</taxon>
        <taxon>Vertebrata</taxon>
        <taxon>Euteleostomi</taxon>
        <taxon>Actinopterygii</taxon>
        <taxon>Neopterygii</taxon>
        <taxon>Teleostei</taxon>
        <taxon>Ostariophysi</taxon>
        <taxon>Cypriniformes</taxon>
        <taxon>Danionidae</taxon>
        <taxon>Danioninae</taxon>
        <taxon>Danio</taxon>
    </lineage>
</organism>
<feature type="signal peptide" evidence="4">
    <location>
        <begin position="1"/>
        <end position="26"/>
    </location>
</feature>
<feature type="chain" id="PRO_0000013256" description="Tiggy-winkle hedgehog protein">
    <location>
        <begin position="27"/>
        <end position="416"/>
    </location>
</feature>
<feature type="chain" id="PRO_0000013257" description="Tiggy-winkle hedgehog protein N-product">
    <location>
        <begin position="27"/>
        <end position="200"/>
    </location>
</feature>
<feature type="binding site" evidence="2">
    <location>
        <position position="92"/>
    </location>
    <ligand>
        <name>Ca(2+)</name>
        <dbReference type="ChEBI" id="CHEBI:29108"/>
        <label>1</label>
    </ligand>
</feature>
<feature type="binding site" evidence="2">
    <location>
        <position position="93"/>
    </location>
    <ligand>
        <name>Ca(2+)</name>
        <dbReference type="ChEBI" id="CHEBI:29108"/>
        <label>1</label>
    </ligand>
</feature>
<feature type="binding site" evidence="2">
    <location>
        <position position="93"/>
    </location>
    <ligand>
        <name>Ca(2+)</name>
        <dbReference type="ChEBI" id="CHEBI:29108"/>
        <label>2</label>
    </ligand>
</feature>
<feature type="binding site" evidence="2">
    <location>
        <position position="98"/>
    </location>
    <ligand>
        <name>Ca(2+)</name>
        <dbReference type="ChEBI" id="CHEBI:29108"/>
        <label>1</label>
    </ligand>
</feature>
<feature type="binding site" evidence="2">
    <location>
        <position position="128"/>
    </location>
    <ligand>
        <name>Ca(2+)</name>
        <dbReference type="ChEBI" id="CHEBI:29108"/>
        <label>1</label>
    </ligand>
</feature>
<feature type="binding site" evidence="2">
    <location>
        <position position="129"/>
    </location>
    <ligand>
        <name>Ca(2+)</name>
        <dbReference type="ChEBI" id="CHEBI:29108"/>
        <label>1</label>
    </ligand>
</feature>
<feature type="binding site" evidence="2">
    <location>
        <position position="129"/>
    </location>
    <ligand>
        <name>Ca(2+)</name>
        <dbReference type="ChEBI" id="CHEBI:29108"/>
        <label>2</label>
    </ligand>
</feature>
<feature type="binding site" evidence="2">
    <location>
        <position position="132"/>
    </location>
    <ligand>
        <name>Ca(2+)</name>
        <dbReference type="ChEBI" id="CHEBI:29108"/>
        <label>2</label>
    </ligand>
</feature>
<feature type="binding site" evidence="2">
    <location>
        <position position="134"/>
    </location>
    <ligand>
        <name>Ca(2+)</name>
        <dbReference type="ChEBI" id="CHEBI:29108"/>
        <label>2</label>
    </ligand>
</feature>
<feature type="binding site" evidence="2">
    <location>
        <position position="143"/>
    </location>
    <ligand>
        <name>Zn(2+)</name>
        <dbReference type="ChEBI" id="CHEBI:29105"/>
    </ligand>
</feature>
<feature type="binding site" evidence="2">
    <location>
        <position position="150"/>
    </location>
    <ligand>
        <name>Zn(2+)</name>
        <dbReference type="ChEBI" id="CHEBI:29105"/>
    </ligand>
</feature>
<feature type="binding site" evidence="2">
    <location>
        <position position="185"/>
    </location>
    <ligand>
        <name>Zn(2+)</name>
        <dbReference type="ChEBI" id="CHEBI:29105"/>
    </ligand>
</feature>
<feature type="site" description="Cleavage; by autolysis">
    <location>
        <begin position="200"/>
        <end position="201"/>
    </location>
</feature>
<feature type="site" description="Involved in auto-cleavage" evidence="1">
    <location>
        <position position="270"/>
    </location>
</feature>
<feature type="site" description="Essential for auto-cleavage" evidence="5">
    <location>
        <position position="273"/>
    </location>
</feature>
<feature type="lipid moiety-binding region" description="N-palmitoyl cysteine" evidence="1">
    <location>
        <position position="27"/>
    </location>
</feature>
<feature type="lipid moiety-binding region" description="Cholesterol glycine ester" evidence="1">
    <location>
        <position position="200"/>
    </location>
</feature>
<feature type="mutagenesis site" description="Loss of autoproteolytic cleavage." evidence="5">
    <original>H</original>
    <variation>A</variation>
    <location>
        <position position="273"/>
    </location>
</feature>
<proteinExistence type="evidence at protein level"/>
<reference key="1">
    <citation type="journal article" date="1995" name="Curr. Biol.">
        <title>Patterning activities of vertebrate hedgehog proteins in the developing eye and brain.</title>
        <authorList>
            <person name="Ekker S.C."/>
            <person name="Ungar A.R."/>
            <person name="Greenstein P."/>
            <person name="von Kessler D.P."/>
            <person name="Porter J.A."/>
            <person name="Moon R.T."/>
            <person name="Beachy P.A."/>
        </authorList>
    </citation>
    <scope>NUCLEOTIDE SEQUENCE [MRNA]</scope>
    <scope>PROTEOLYTIC PROCESSING</scope>
    <scope>AUTOCATALYTIC CLEAVAGE</scope>
    <scope>TISSUE SPECIFICITY</scope>
    <scope>FUNCTION</scope>
    <scope>MUTAGENESIS OF HIS-273</scope>
    <source>
        <tissue>Embryo</tissue>
    </source>
</reference>
<reference key="2">
    <citation type="journal article" date="1996" name="Proc. Natl. Acad. Sci. U.S.A.">
        <title>Evolutionary analyses of hedgehog and Hoxd-10 genes in fish species closely related to the zebrafish.</title>
        <authorList>
            <person name="Zardoya R."/>
            <person name="Abouheif E."/>
            <person name="Meyer A."/>
        </authorList>
    </citation>
    <scope>NUCLEOTIDE SEQUENCE [GENOMIC DNA] OF 110-162</scope>
    <source>
        <tissue>Muscle</tissue>
    </source>
</reference>
<comment type="function">
    <molecule>Tiggy-winkle hedgehog protein</molecule>
    <text evidence="2 3 5">The C-terminal part of the tiggy-winkle hedgehog protein precursor displays an autoproteolysis and a cholesterol transferase activity (By similarity). Both activities result in the cleavage of the full-length protein into two parts (N-product and C-product) followed by the covalent attachment of a cholesterol moiety to the C-terminal of the newly generated N-product (By similarity). Both activities occur in the endoplasmic reticulum (By similarity). Once cleaved, the C-product is degraded in the endoplasmic reticulum (By similarity).</text>
</comment>
<comment type="function">
    <molecule>Tiggy-winkle hedgehog protein N-product</molecule>
    <text evidence="2 3 5">The dually lipidated tiggy-winkle hedgehog protein N-product is a morphogen which is essential for a variety of patterning events during development (By similarity). Involved in dorso-ventral patterning of the brain and in early patterning of the developing eyes (PubMed:7583153). Binds to the patched (PTCH1) receptor, which functions in association with smoothened (SMO), to activate the transcription of target genes (By similarity).</text>
</comment>
<comment type="subunit">
    <molecule>Tiggy-winkle hedgehog protein N-product</molecule>
    <text evidence="2">Multimer.</text>
</comment>
<comment type="subunit">
    <text evidence="2 3">Interacts with HHATL/GUP1 which negatively regulates HHAT-mediated palmitoylation of the TWHH N-terminus (By similarity). Interacts with BOC and CDON (By similarity). Interacts with HHIP (By similarity). Interacts with DISP1 via its cholesterol anchor (By similarity). Interacts with SCUBE2 (By similarity).</text>
</comment>
<comment type="subcellular location">
    <molecule>Tiggy-winkle hedgehog protein N-product</molecule>
    <subcellularLocation>
        <location evidence="3">Cell membrane</location>
        <topology evidence="3">Lipid-anchor</topology>
    </subcellularLocation>
    <text evidence="3">The dual-lipidated tiggy-winkle hedgehog protein N-product (TWHHN) is firmly tethered to the cell membrane where it forms multimers (By similarity). Further solubilization and release from the cell surface seem to be achieved through different mechanisms, including the interaction with DISP1 and SCUBE2, movement by lipoprotein particles, transport by cellular extensions called cytonemes or by the proteolytic removal of both terminal lipidated peptides.</text>
</comment>
<comment type="subcellular location">
    <molecule>Tiggy-winkle hedgehog protein</molecule>
    <subcellularLocation>
        <location evidence="2">Endoplasmic reticulum membrane</location>
    </subcellularLocation>
    <subcellularLocation>
        <location evidence="2">Golgi apparatus membrane</location>
    </subcellularLocation>
    <text evidence="2">Co-localizes with HHAT in the ER and Golgi membrane.</text>
</comment>
<comment type="tissue specificity">
    <text evidence="5">Expressed in the ventral midline of the neural tube and brain. In the developing brain, expression occurs in domains that include a discrete region in the floor of the diencephalon. Not detected in the notochord or developing fin bud.</text>
</comment>
<comment type="domain">
    <molecule>Tiggy-winkle hedgehog protein N-product</molecule>
    <text evidence="3">Binds calcium and zinc ions; this stabilizes the protein fold and is essential for protein-protein interactions mediated by this domain.</text>
</comment>
<comment type="domain">
    <molecule>Tiggy-winkle hedgehog protein N-product</molecule>
    <text evidence="3">The Cardin-Weintraub (CW) motif is required for heparan sulfate binding of the solubilized TWHHN (By similarity). The N-terminal palmitoylated peptide is cleaved at the Heparan sulfate-binding Cardin-Weintraub (CW) motif site (By similarity). The cleavage reduced the interactions with heparan sulfate. The cleavage is enhanced by SCUBE2 (By similarity).</text>
</comment>
<comment type="PTM">
    <molecule>Tiggy-winkle hedgehog protein</molecule>
    <text evidence="3 5">The C-terminal domain displays an autoproteolysis activity and a cholesterol transferase activity (By similarity). Both activities result in the cleavage of the full-length protein into two parts (N-product and C-product) followed by the covalent attachment of a cholesterol moiety to the C-terminal of the newly generated N-product (By similarity). Cholesterylation is required for the tiggy-winkle hedgehog protein N-product targeting to lipid rafts and multimerization (By similarity). N-product is the active species in both local and long-range signaling, whereas the C-product is degraded in the endoplasmic reticulum (By similarity).</text>
</comment>
<comment type="PTM">
    <molecule>Tiggy-winkle hedgehog protein N-product</molecule>
    <text evidence="3">N-palmitoylation by HHAT of N-product is required for tiggy-winkle hedgehog protein N-product multimerization and full activity (By similarity). It is a prerequisite for the membrane-proximal positioning and the subsequent shedding of this N-terminal peptide (By similarity).</text>
</comment>
<comment type="PTM">
    <molecule>Tiggy-winkle hedgehog protein N-product</molecule>
    <text evidence="3">The lipidated N- and C-terminal peptides of N-product can be cleaved (shedding) (By similarity). The N-terminal palmitoylated peptide is cleaved at the Cardin-Weintraub (CW) motif site (By similarity). The cleavage reduced the interactions with heparan sulfate (By similarity). The cleavage is enhanced by SCUBE2 (By similarity).</text>
</comment>
<comment type="similarity">
    <text evidence="6">Belongs to the hedgehog family.</text>
</comment>
<comment type="caution">
    <text evidence="3">The several steps and mechanisms that permit controlled tiggy-winkle hedgehog dispersion and gradient formation remain controversial. The C-terminal part of the tiggy-winkle hedgehog protein precursor displays an autoproteolysis activity and a cholesterol transferase activity resulting in the cleavage and covalent attachment of a cholesterol moiety to the C-terminal of the newly generated N-terminal fragment (N-product). The protein is further modified by covalent addition of palmitate at the N-terminal of N-product, resulting to the dual-lipidated N-product. The latter is firmly tethered to the cell membrane where it forms multimers. Further solubilization and release from the cell surface seem to be achieved through different mechanisms, including the interaction with DISP1 and SCUBE2, movement by lipoprotein particles, transport by cellular extensions called cytonemes or by proteolytic removal of both terminal lipidated peptides. Once released, the fully processed TWHHN can signal within embryonic tissues both at short and long-range.</text>
</comment>
<name>TWHH_DANRE</name>
<accession>Q90419</accession>
<accession>O13212</accession>
<gene>
    <name type="primary">shhb</name>
    <name type="synonym">twhh</name>
</gene>
<evidence type="ECO:0000250" key="1"/>
<evidence type="ECO:0000250" key="2">
    <source>
        <dbReference type="UniProtKB" id="Q15465"/>
    </source>
</evidence>
<evidence type="ECO:0000250" key="3">
    <source>
        <dbReference type="UniProtKB" id="Q62226"/>
    </source>
</evidence>
<evidence type="ECO:0000255" key="4"/>
<evidence type="ECO:0000269" key="5">
    <source>
    </source>
</evidence>
<evidence type="ECO:0000305" key="6"/>
<sequence length="416" mass="46576">MDVRLHLKQFALLCFISLLLTPCGLACGPGRGYGKRRHPKKLTPLAYKQFIPNVAEKTLGASGKYEGKITRNSERFKELIPNYNPDIIFKDEENTNADRLMTKRCKDKLNSLAISVMNHWPGVKLRVTEGWDEDGHHLEESLHYEGRAVDITTSDRDKSKYGMLSRLAVEAGFDWVYYESKAHIHCSVKAENSVAAKSGGCFPGSGTVTLGDGTRKPIKDLKVGDRVLAADEKGNVLISDFIMFIDHDPTTRRQFIVIETSEPFTKLTLTAAHLVFVGNSSAASGITATFASNVKPGDTVLVWEDTCESLKSVTVKRIYTEEHEGSFAPVTAHGTIIVDQVLASCYAVIENHKWAHWAFAPVRLCHKLMTWLFPARESNVNFQEDGIHWYSNMLFHIGSWLLDRDSFHPLGILHLS</sequence>
<protein>
    <recommendedName>
        <fullName evidence="6">Tiggy-winkle hedgehog protein</fullName>
        <shortName>TWHH</shortName>
        <ecNumber evidence="3">3.1.-.-</ecNumber>
    </recommendedName>
    <alternativeName>
        <fullName>Sonic hedgehog protein B</fullName>
        <shortName>SHHB</shortName>
    </alternativeName>
    <component>
        <recommendedName>
            <fullName>Tiggy-winkle hedgehog protein N-product</fullName>
        </recommendedName>
        <alternativeName>
            <fullName evidence="3">Shh N-terminal processed signaling domains</fullName>
            <shortName evidence="3">ShhNp</shortName>
        </alternativeName>
        <alternativeName>
            <fullName>Sonic hedgehog protein N-product</fullName>
            <shortName>ShhN</shortName>
        </alternativeName>
    </component>
</protein>
<dbReference type="EC" id="3.1.-.-" evidence="3"/>
<dbReference type="EMBL" id="U30710">
    <property type="protein sequence ID" value="AAC59741.1"/>
    <property type="molecule type" value="mRNA"/>
</dbReference>
<dbReference type="EMBL" id="U68237">
    <property type="protein sequence ID" value="AAB38678.1"/>
    <property type="molecule type" value="Genomic_DNA"/>
</dbReference>
<dbReference type="SMR" id="Q90419"/>
<dbReference type="FunCoup" id="Q90419">
    <property type="interactions" value="388"/>
</dbReference>
<dbReference type="STRING" id="7955.ENSDARP00000056746"/>
<dbReference type="MEROPS" id="C46.005"/>
<dbReference type="PaxDb" id="7955-ENSDARP00000056746"/>
<dbReference type="Ensembl" id="ENSDART00000056747">
    <property type="protein sequence ID" value="ENSDARP00000056746"/>
    <property type="gene ID" value="ENSDARG00000038867"/>
</dbReference>
<dbReference type="AGR" id="ZFIN:ZDB-GENE-980526-41"/>
<dbReference type="ZFIN" id="ZDB-GENE-980526-41">
    <property type="gene designation" value="shhb"/>
</dbReference>
<dbReference type="eggNOG" id="KOG3638">
    <property type="taxonomic scope" value="Eukaryota"/>
</dbReference>
<dbReference type="HOGENOM" id="CLU_034686_0_0_1"/>
<dbReference type="InParanoid" id="Q90419"/>
<dbReference type="OMA" id="HQVDLQS"/>
<dbReference type="PhylomeDB" id="Q90419"/>
<dbReference type="TreeFam" id="TF106458"/>
<dbReference type="Reactome" id="R-DRE-5358346">
    <property type="pathway name" value="Hedgehog ligand biogenesis"/>
</dbReference>
<dbReference type="Reactome" id="R-DRE-5362798">
    <property type="pathway name" value="Release of Hh-Np from the secreting cell"/>
</dbReference>
<dbReference type="Reactome" id="R-DRE-5632681">
    <property type="pathway name" value="Ligand-receptor interactions"/>
</dbReference>
<dbReference type="PRO" id="PR:Q90419"/>
<dbReference type="Proteomes" id="UP000000437">
    <property type="component" value="Unplaced"/>
</dbReference>
<dbReference type="Bgee" id="ENSDARG00000038867">
    <property type="expression patterns" value="Expressed in floor plate and 26 other cell types or tissues"/>
</dbReference>
<dbReference type="ExpressionAtlas" id="Q90419">
    <property type="expression patterns" value="baseline and differential"/>
</dbReference>
<dbReference type="GO" id="GO:0005789">
    <property type="term" value="C:endoplasmic reticulum membrane"/>
    <property type="evidence" value="ECO:0007669"/>
    <property type="project" value="UniProtKB-SubCell"/>
</dbReference>
<dbReference type="GO" id="GO:0005615">
    <property type="term" value="C:extracellular space"/>
    <property type="evidence" value="ECO:0000318"/>
    <property type="project" value="GO_Central"/>
</dbReference>
<dbReference type="GO" id="GO:0000139">
    <property type="term" value="C:Golgi membrane"/>
    <property type="evidence" value="ECO:0007669"/>
    <property type="project" value="UniProtKB-SubCell"/>
</dbReference>
<dbReference type="GO" id="GO:0005886">
    <property type="term" value="C:plasma membrane"/>
    <property type="evidence" value="ECO:0007669"/>
    <property type="project" value="UniProtKB-SubCell"/>
</dbReference>
<dbReference type="GO" id="GO:0005509">
    <property type="term" value="F:calcium ion binding"/>
    <property type="evidence" value="ECO:0000318"/>
    <property type="project" value="GO_Central"/>
</dbReference>
<dbReference type="GO" id="GO:0140853">
    <property type="term" value="F:cholesterol-protein transferase activity"/>
    <property type="evidence" value="ECO:0000250"/>
    <property type="project" value="UniProtKB"/>
</dbReference>
<dbReference type="GO" id="GO:0005113">
    <property type="term" value="F:patched binding"/>
    <property type="evidence" value="ECO:0000318"/>
    <property type="project" value="GO_Central"/>
</dbReference>
<dbReference type="GO" id="GO:0008233">
    <property type="term" value="F:peptidase activity"/>
    <property type="evidence" value="ECO:0000250"/>
    <property type="project" value="UniProtKB"/>
</dbReference>
<dbReference type="GO" id="GO:0001708">
    <property type="term" value="P:cell fate specification"/>
    <property type="evidence" value="ECO:0000318"/>
    <property type="project" value="GO_Central"/>
</dbReference>
<dbReference type="GO" id="GO:0007267">
    <property type="term" value="P:cell-cell signaling"/>
    <property type="evidence" value="ECO:0007669"/>
    <property type="project" value="InterPro"/>
</dbReference>
<dbReference type="GO" id="GO:0048702">
    <property type="term" value="P:embryonic neurocranium morphogenesis"/>
    <property type="evidence" value="ECO:0000316"/>
    <property type="project" value="ZFIN"/>
</dbReference>
<dbReference type="GO" id="GO:0048703">
    <property type="term" value="P:embryonic viscerocranium morphogenesis"/>
    <property type="evidence" value="ECO:0000316"/>
    <property type="project" value="ZFIN"/>
</dbReference>
<dbReference type="GO" id="GO:0060956">
    <property type="term" value="P:endocardial cell differentiation"/>
    <property type="evidence" value="ECO:0000316"/>
    <property type="project" value="ZFIN"/>
</dbReference>
<dbReference type="GO" id="GO:0030900">
    <property type="term" value="P:forebrain development"/>
    <property type="evidence" value="ECO:0000315"/>
    <property type="project" value="ZFIN"/>
</dbReference>
<dbReference type="GO" id="GO:0042063">
    <property type="term" value="P:gliogenesis"/>
    <property type="evidence" value="ECO:0000316"/>
    <property type="project" value="ZFIN"/>
</dbReference>
<dbReference type="GO" id="GO:0030182">
    <property type="term" value="P:neuron differentiation"/>
    <property type="evidence" value="ECO:0000315"/>
    <property type="project" value="ZFIN"/>
</dbReference>
<dbReference type="GO" id="GO:0048663">
    <property type="term" value="P:neuron fate commitment"/>
    <property type="evidence" value="ECO:0000316"/>
    <property type="project" value="ZFIN"/>
</dbReference>
<dbReference type="GO" id="GO:0048709">
    <property type="term" value="P:oligodendrocyte differentiation"/>
    <property type="evidence" value="ECO:0000318"/>
    <property type="project" value="GO_Central"/>
</dbReference>
<dbReference type="GO" id="GO:0045880">
    <property type="term" value="P:positive regulation of smoothened signaling pathway"/>
    <property type="evidence" value="ECO:0000250"/>
    <property type="project" value="UniProtKB"/>
</dbReference>
<dbReference type="GO" id="GO:0016540">
    <property type="term" value="P:protein autoprocessing"/>
    <property type="evidence" value="ECO:0007669"/>
    <property type="project" value="InterPro"/>
</dbReference>
<dbReference type="GO" id="GO:0010468">
    <property type="term" value="P:regulation of gene expression"/>
    <property type="evidence" value="ECO:0000318"/>
    <property type="project" value="GO_Central"/>
</dbReference>
<dbReference type="GO" id="GO:0097264">
    <property type="term" value="P:self proteolysis"/>
    <property type="evidence" value="ECO:0000250"/>
    <property type="project" value="UniProtKB"/>
</dbReference>
<dbReference type="GO" id="GO:0007224">
    <property type="term" value="P:smoothened signaling pathway"/>
    <property type="evidence" value="ECO:0000318"/>
    <property type="project" value="GO_Central"/>
</dbReference>
<dbReference type="GO" id="GO:0055002">
    <property type="term" value="P:striated muscle cell development"/>
    <property type="evidence" value="ECO:0000316"/>
    <property type="project" value="ZFIN"/>
</dbReference>
<dbReference type="CDD" id="cd00081">
    <property type="entry name" value="Hint"/>
    <property type="match status" value="1"/>
</dbReference>
<dbReference type="FunFam" id="2.170.16.10:FF:000001">
    <property type="entry name" value="Indian hedgehog"/>
    <property type="match status" value="1"/>
</dbReference>
<dbReference type="FunFam" id="3.30.1380.10:FF:000001">
    <property type="entry name" value="Indian hedgehog"/>
    <property type="match status" value="1"/>
</dbReference>
<dbReference type="Gene3D" id="3.30.1380.10">
    <property type="match status" value="1"/>
</dbReference>
<dbReference type="Gene3D" id="2.170.16.10">
    <property type="entry name" value="Hedgehog/Intein (Hint) domain"/>
    <property type="match status" value="1"/>
</dbReference>
<dbReference type="InterPro" id="IPR001657">
    <property type="entry name" value="Hedgehog"/>
</dbReference>
<dbReference type="InterPro" id="IPR001767">
    <property type="entry name" value="Hedgehog_Hint"/>
</dbReference>
<dbReference type="InterPro" id="IPR009045">
    <property type="entry name" value="Hedgehog_sig/DD-Pept_Zn-bd_sf"/>
</dbReference>
<dbReference type="InterPro" id="IPR050387">
    <property type="entry name" value="Hedgehog_Signaling"/>
</dbReference>
<dbReference type="InterPro" id="IPR000320">
    <property type="entry name" value="Hedgehog_signalling_dom"/>
</dbReference>
<dbReference type="InterPro" id="IPR003586">
    <property type="entry name" value="Hint_dom_C"/>
</dbReference>
<dbReference type="InterPro" id="IPR003587">
    <property type="entry name" value="Hint_dom_N"/>
</dbReference>
<dbReference type="InterPro" id="IPR036844">
    <property type="entry name" value="Hint_dom_sf"/>
</dbReference>
<dbReference type="PANTHER" id="PTHR11889">
    <property type="entry name" value="HEDGEHOG"/>
    <property type="match status" value="1"/>
</dbReference>
<dbReference type="PANTHER" id="PTHR11889:SF36">
    <property type="entry name" value="SONIC HEDGEHOG PROTEIN"/>
    <property type="match status" value="1"/>
</dbReference>
<dbReference type="Pfam" id="PF01085">
    <property type="entry name" value="HH_signal"/>
    <property type="match status" value="1"/>
</dbReference>
<dbReference type="Pfam" id="PF01079">
    <property type="entry name" value="Hint"/>
    <property type="match status" value="1"/>
</dbReference>
<dbReference type="PIRSF" id="PIRSF009400">
    <property type="entry name" value="Peptidase_C46"/>
    <property type="match status" value="1"/>
</dbReference>
<dbReference type="PRINTS" id="PR00632">
    <property type="entry name" value="SONICHHOG"/>
</dbReference>
<dbReference type="SMART" id="SM00305">
    <property type="entry name" value="HintC"/>
    <property type="match status" value="1"/>
</dbReference>
<dbReference type="SMART" id="SM00306">
    <property type="entry name" value="HintN"/>
    <property type="match status" value="1"/>
</dbReference>
<dbReference type="SUPFAM" id="SSF55166">
    <property type="entry name" value="Hedgehog/DD-peptidase"/>
    <property type="match status" value="1"/>
</dbReference>
<dbReference type="SUPFAM" id="SSF51294">
    <property type="entry name" value="Hedgehog/intein (Hint) domain"/>
    <property type="match status" value="1"/>
</dbReference>